<keyword id="KW-1185">Reference proteome</keyword>
<evidence type="ECO:0000255" key="1">
    <source>
        <dbReference type="PROSITE-ProRule" id="PRU00388"/>
    </source>
</evidence>
<evidence type="ECO:0000305" key="2"/>
<name>AKTP1_DROPS</name>
<comment type="similarity">
    <text evidence="1">Belongs to the ubiquitin-conjugating enzyme family. FTS subfamily.</text>
</comment>
<comment type="caution">
    <text evidence="2">Lacks the conserved Cys residue necessary for ubiquitin-conjugating enzyme E2 activity.</text>
</comment>
<accession>Q28XA5</accession>
<organism>
    <name type="scientific">Drosophila pseudoobscura pseudoobscura</name>
    <name type="common">Fruit fly</name>
    <dbReference type="NCBI Taxonomy" id="46245"/>
    <lineage>
        <taxon>Eukaryota</taxon>
        <taxon>Metazoa</taxon>
        <taxon>Ecdysozoa</taxon>
        <taxon>Arthropoda</taxon>
        <taxon>Hexapoda</taxon>
        <taxon>Insecta</taxon>
        <taxon>Pterygota</taxon>
        <taxon>Neoptera</taxon>
        <taxon>Endopterygota</taxon>
        <taxon>Diptera</taxon>
        <taxon>Brachycera</taxon>
        <taxon>Muscomorpha</taxon>
        <taxon>Ephydroidea</taxon>
        <taxon>Drosophilidae</taxon>
        <taxon>Drosophila</taxon>
        <taxon>Sophophora</taxon>
    </lineage>
</organism>
<proteinExistence type="inferred from homology"/>
<sequence>MTLDLDANKKDDKILITTIQQEYKILAEYKMIESEKLGGIYTIPSLANSLQWFGVFFGRQGLYSESVFRFSLLLPDRFPDDKSLPTVIFQQNILHPHVCPYTNSLDISHAFPEWRCGEDHLWQLFKYMQAIFSDPIDSIRGIEMDKIKNPEAAELLLTNREEFAARVLENIKESKEHIYDPQPTEDPHYIVFEKFQPDVHGPVLERIKAGRNNQTDSTLQQTNGGTATGLSWVKEGEFKPLSIE</sequence>
<dbReference type="EMBL" id="CM000071">
    <property type="protein sequence ID" value="EAL26411.1"/>
    <property type="molecule type" value="Genomic_DNA"/>
</dbReference>
<dbReference type="SMR" id="Q28XA5"/>
<dbReference type="FunCoup" id="Q28XA5">
    <property type="interactions" value="1048"/>
</dbReference>
<dbReference type="STRING" id="46245.Q28XA5"/>
<dbReference type="EnsemblMetazoa" id="FBtr0277481">
    <property type="protein sequence ID" value="FBpp0275919"/>
    <property type="gene ID" value="FBgn0070437"/>
</dbReference>
<dbReference type="GeneID" id="4805431"/>
<dbReference type="KEGG" id="dpo:4805431"/>
<dbReference type="CTD" id="47272"/>
<dbReference type="eggNOG" id="KOG0429">
    <property type="taxonomic scope" value="Eukaryota"/>
</dbReference>
<dbReference type="HOGENOM" id="CLU_083049_1_0_1"/>
<dbReference type="InParanoid" id="Q28XA5"/>
<dbReference type="OMA" id="WGFPEWR"/>
<dbReference type="PhylomeDB" id="Q28XA5"/>
<dbReference type="ChiTaRS" id="Ubx">
    <property type="organism name" value="fly"/>
</dbReference>
<dbReference type="Proteomes" id="UP000001819">
    <property type="component" value="Chromosome 3"/>
</dbReference>
<dbReference type="Bgee" id="FBgn0070437">
    <property type="expression patterns" value="Expressed in insect adult head and 2 other cell types or tissues"/>
</dbReference>
<dbReference type="CDD" id="cd23814">
    <property type="entry name" value="UEV_AKTIP"/>
    <property type="match status" value="1"/>
</dbReference>
<dbReference type="FunFam" id="3.10.110.10:FF:000121">
    <property type="entry name" value="Protein crossbronx"/>
    <property type="match status" value="1"/>
</dbReference>
<dbReference type="Gene3D" id="3.10.110.10">
    <property type="entry name" value="Ubiquitin Conjugating Enzyme"/>
    <property type="match status" value="1"/>
</dbReference>
<dbReference type="InterPro" id="IPR000608">
    <property type="entry name" value="UBQ-conjugat_E2_core"/>
</dbReference>
<dbReference type="InterPro" id="IPR016135">
    <property type="entry name" value="UBQ-conjugating_enzyme/RWD"/>
</dbReference>
<dbReference type="Pfam" id="PF00179">
    <property type="entry name" value="UQ_con"/>
    <property type="match status" value="1"/>
</dbReference>
<dbReference type="SMART" id="SM00212">
    <property type="entry name" value="UBCc"/>
    <property type="match status" value="1"/>
</dbReference>
<dbReference type="SUPFAM" id="SSF54495">
    <property type="entry name" value="UBC-like"/>
    <property type="match status" value="1"/>
</dbReference>
<dbReference type="PROSITE" id="PS50127">
    <property type="entry name" value="UBC_2"/>
    <property type="match status" value="1"/>
</dbReference>
<reference key="1">
    <citation type="journal article" date="2005" name="Genome Res.">
        <title>Comparative genome sequencing of Drosophila pseudoobscura: chromosomal, gene, and cis-element evolution.</title>
        <authorList>
            <person name="Richards S."/>
            <person name="Liu Y."/>
            <person name="Bettencourt B.R."/>
            <person name="Hradecky P."/>
            <person name="Letovsky S."/>
            <person name="Nielsen R."/>
            <person name="Thornton K."/>
            <person name="Hubisz M.J."/>
            <person name="Chen R."/>
            <person name="Meisel R.P."/>
            <person name="Couronne O."/>
            <person name="Hua S."/>
            <person name="Smith M.A."/>
            <person name="Zhang P."/>
            <person name="Liu J."/>
            <person name="Bussemaker H.J."/>
            <person name="van Batenburg M.F."/>
            <person name="Howells S.L."/>
            <person name="Scherer S.E."/>
            <person name="Sodergren E."/>
            <person name="Matthews B.B."/>
            <person name="Crosby M.A."/>
            <person name="Schroeder A.J."/>
            <person name="Ortiz-Barrientos D."/>
            <person name="Rives C.M."/>
            <person name="Metzker M.L."/>
            <person name="Muzny D.M."/>
            <person name="Scott G."/>
            <person name="Steffen D."/>
            <person name="Wheeler D.A."/>
            <person name="Worley K.C."/>
            <person name="Havlak P."/>
            <person name="Durbin K.J."/>
            <person name="Egan A."/>
            <person name="Gill R."/>
            <person name="Hume J."/>
            <person name="Morgan M.B."/>
            <person name="Miner G."/>
            <person name="Hamilton C."/>
            <person name="Huang Y."/>
            <person name="Waldron L."/>
            <person name="Verduzco D."/>
            <person name="Clerc-Blankenburg K.P."/>
            <person name="Dubchak I."/>
            <person name="Noor M.A.F."/>
            <person name="Anderson W."/>
            <person name="White K.P."/>
            <person name="Clark A.G."/>
            <person name="Schaeffer S.W."/>
            <person name="Gelbart W.M."/>
            <person name="Weinstock G.M."/>
            <person name="Gibbs R.A."/>
        </authorList>
    </citation>
    <scope>NUCLEOTIDE SEQUENCE [LARGE SCALE GENOMIC DNA]</scope>
    <source>
        <strain>MV2-25 / Tucson 14011-0121.94</strain>
    </source>
</reference>
<gene>
    <name type="primary">cbx</name>
    <name type="ORF">GA10380</name>
</gene>
<feature type="chain" id="PRO_0000379035" description="Protein crossbronx">
    <location>
        <begin position="1"/>
        <end position="244"/>
    </location>
</feature>
<feature type="domain" description="UBC core" evidence="1">
    <location>
        <begin position="20"/>
        <end position="176"/>
    </location>
</feature>
<protein>
    <recommendedName>
        <fullName>Protein crossbronx</fullName>
    </recommendedName>
</protein>